<keyword id="KW-1185">Reference proteome</keyword>
<protein>
    <recommendedName>
        <fullName>Uncharacterized protein L803</fullName>
    </recommendedName>
</protein>
<proteinExistence type="predicted"/>
<accession>Q5UR59</accession>
<gene>
    <name type="ordered locus">MIMI_L803</name>
</gene>
<name>YL803_MIMIV</name>
<dbReference type="EMBL" id="AY653733">
    <property type="protein sequence ID" value="AAV51063.1"/>
    <property type="molecule type" value="Genomic_DNA"/>
</dbReference>
<dbReference type="SMR" id="Q5UR59"/>
<dbReference type="KEGG" id="vg:9925465"/>
<dbReference type="OrthoDB" id="12163at10239"/>
<dbReference type="Proteomes" id="UP000001134">
    <property type="component" value="Genome"/>
</dbReference>
<dbReference type="CDD" id="cd00077">
    <property type="entry name" value="HDc"/>
    <property type="match status" value="1"/>
</dbReference>
<dbReference type="Gene3D" id="1.20.58.1910">
    <property type="match status" value="1"/>
</dbReference>
<dbReference type="Gene3D" id="1.10.472.50">
    <property type="entry name" value="HD-domain/PDEase-like"/>
    <property type="match status" value="1"/>
</dbReference>
<dbReference type="InterPro" id="IPR003607">
    <property type="entry name" value="HD/PDEase_dom"/>
</dbReference>
<dbReference type="PANTHER" id="PTHR33594:SF1">
    <property type="entry name" value="HD_PDEASE DOMAIN-CONTAINING PROTEIN"/>
    <property type="match status" value="1"/>
</dbReference>
<dbReference type="PANTHER" id="PTHR33594">
    <property type="entry name" value="SUPERFAMILY HYDROLASE, PUTATIVE (AFU_ORTHOLOGUE AFUA_1G03035)-RELATED"/>
    <property type="match status" value="1"/>
</dbReference>
<dbReference type="SUPFAM" id="SSF109604">
    <property type="entry name" value="HD-domain/PDEase-like"/>
    <property type="match status" value="1"/>
</dbReference>
<reference key="1">
    <citation type="journal article" date="2004" name="Science">
        <title>The 1.2-megabase genome sequence of Mimivirus.</title>
        <authorList>
            <person name="Raoult D."/>
            <person name="Audic S."/>
            <person name="Robert C."/>
            <person name="Abergel C."/>
            <person name="Renesto P."/>
            <person name="Ogata H."/>
            <person name="La Scola B."/>
            <person name="Susan M."/>
            <person name="Claverie J.-M."/>
        </authorList>
    </citation>
    <scope>NUCLEOTIDE SEQUENCE [LARGE SCALE GENOMIC DNA]</scope>
    <source>
        <strain>Rowbotham-Bradford</strain>
    </source>
</reference>
<feature type="chain" id="PRO_0000071358" description="Uncharacterized protein L803">
    <location>
        <begin position="1"/>
        <end position="243"/>
    </location>
</feature>
<sequence length="243" mass="28230">METNFIDLRNLTELTVREFMSNHNVAGHDVDHFIAVRNHAIKALKYENISNSKKLQVEFAAMLHDVDDPKIFSQSIDYQNAKYILDTIFTKMSFENIISDCTYDVFKQGIVTLISLVSCSKNGDDGVEESWMAIPRDADRLEAIGKIGIQRCTDYANHIKLPYYLDSTPRAKTSEEALSFANRDRFDRYKNGHKSVSMIDHYYDKLLHIGRPEYLCSNNPYILEKSNKRNQEMIDYVINFKFE</sequence>
<organismHost>
    <name type="scientific">Acanthamoeba polyphaga</name>
    <name type="common">Amoeba</name>
    <dbReference type="NCBI Taxonomy" id="5757"/>
</organismHost>
<organism>
    <name type="scientific">Acanthamoeba polyphaga mimivirus</name>
    <name type="common">APMV</name>
    <dbReference type="NCBI Taxonomy" id="212035"/>
    <lineage>
        <taxon>Viruses</taxon>
        <taxon>Varidnaviria</taxon>
        <taxon>Bamfordvirae</taxon>
        <taxon>Nucleocytoviricota</taxon>
        <taxon>Megaviricetes</taxon>
        <taxon>Imitervirales</taxon>
        <taxon>Mimiviridae</taxon>
        <taxon>Megamimivirinae</taxon>
        <taxon>Mimivirus</taxon>
        <taxon>Mimivirus bradfordmassiliense</taxon>
    </lineage>
</organism>